<name>AGUA_PSEFS</name>
<organism>
    <name type="scientific">Pseudomonas fluorescens (strain SBW25)</name>
    <dbReference type="NCBI Taxonomy" id="216595"/>
    <lineage>
        <taxon>Bacteria</taxon>
        <taxon>Pseudomonadati</taxon>
        <taxon>Pseudomonadota</taxon>
        <taxon>Gammaproteobacteria</taxon>
        <taxon>Pseudomonadales</taxon>
        <taxon>Pseudomonadaceae</taxon>
        <taxon>Pseudomonas</taxon>
    </lineage>
</organism>
<protein>
    <recommendedName>
        <fullName evidence="1">Agmatine deiminase</fullName>
        <ecNumber evidence="1">3.5.3.12</ecNumber>
    </recommendedName>
    <alternativeName>
        <fullName evidence="1">Agmatine iminohydrolase</fullName>
    </alternativeName>
</protein>
<evidence type="ECO:0000255" key="1">
    <source>
        <dbReference type="HAMAP-Rule" id="MF_01841"/>
    </source>
</evidence>
<keyword id="KW-0378">Hydrolase</keyword>
<keyword id="KW-0620">Polyamine biosynthesis</keyword>
<gene>
    <name evidence="1" type="primary">aguA</name>
    <name type="ordered locus">PFLU_0293</name>
</gene>
<feature type="chain" id="PRO_1000216094" description="Agmatine deiminase">
    <location>
        <begin position="1"/>
        <end position="368"/>
    </location>
</feature>
<feature type="active site" description="Amidino-cysteine intermediate" evidence="1">
    <location>
        <position position="357"/>
    </location>
</feature>
<accession>C3K5U8</accession>
<sequence length="368" mass="40397">MTTLHSTPRADGFHMPAEWAPQTQTWMIWPERPDNWRLGGKPAQAAHVAVAKAIARFEPVTVAVSAGQYENARARLDVPNIRVVEMSSDDAWVRDTGPTFVINRSGEVRGVNWDFNAWGGFDGGLYSPWNRDSQIGGKILEIERAPRYCTEGFVLEGGSIHVDGEGTLITTEECLLNSNRNPHLDRAQIEAVLSANLAVDKIIWLPDGLFNDETDGHVDNFCCYVRPGEVLLAWTDDPQDPNYARCHAAMNVLQSSTDAQGRSFTVHKMPIPGPLYATEAECAGVDPVDGTQERNPTVRLAGSYVNFLIVNGGIIAPSFDDPLDSQAKAILQDLFPQHEVVMVPGRELLLGGGNIHCLTQQQPAPHKN</sequence>
<comment type="function">
    <text evidence="1">Mediates the hydrolysis of agmatine into N-carbamoylputrescine in the arginine decarboxylase (ADC) pathway of putrescine biosynthesis, a basic polyamine.</text>
</comment>
<comment type="catalytic activity">
    <reaction evidence="1">
        <text>agmatine + H2O = N-carbamoylputrescine + NH4(+)</text>
        <dbReference type="Rhea" id="RHEA:18037"/>
        <dbReference type="ChEBI" id="CHEBI:15377"/>
        <dbReference type="ChEBI" id="CHEBI:28938"/>
        <dbReference type="ChEBI" id="CHEBI:58145"/>
        <dbReference type="ChEBI" id="CHEBI:58318"/>
        <dbReference type="EC" id="3.5.3.12"/>
    </reaction>
</comment>
<comment type="pathway">
    <text evidence="1">Amine and polyamine biosynthesis; putrescine biosynthesis via agmatine pathway; N-carbamoylputrescine from agmatine: step 1/1.</text>
</comment>
<comment type="subunit">
    <text evidence="1">Homodimer.</text>
</comment>
<comment type="similarity">
    <text evidence="1">Belongs to the agmatine deiminase family.</text>
</comment>
<proteinExistence type="inferred from homology"/>
<dbReference type="EC" id="3.5.3.12" evidence="1"/>
<dbReference type="EMBL" id="AM181176">
    <property type="protein sequence ID" value="CAY46571.1"/>
    <property type="molecule type" value="Genomic_DNA"/>
</dbReference>
<dbReference type="RefSeq" id="WP_012721716.1">
    <property type="nucleotide sequence ID" value="NC_012660.1"/>
</dbReference>
<dbReference type="SMR" id="C3K5U8"/>
<dbReference type="STRING" id="294.SRM1_00342"/>
<dbReference type="PATRIC" id="fig|216595.4.peg.527"/>
<dbReference type="eggNOG" id="COG2957">
    <property type="taxonomic scope" value="Bacteria"/>
</dbReference>
<dbReference type="HOGENOM" id="CLU_037682_1_0_6"/>
<dbReference type="OrthoDB" id="9808013at2"/>
<dbReference type="UniPathway" id="UPA00534">
    <property type="reaction ID" value="UER00285"/>
</dbReference>
<dbReference type="GO" id="GO:0047632">
    <property type="term" value="F:agmatine deiminase activity"/>
    <property type="evidence" value="ECO:0007669"/>
    <property type="project" value="UniProtKB-UniRule"/>
</dbReference>
<dbReference type="GO" id="GO:0004668">
    <property type="term" value="F:protein-arginine deiminase activity"/>
    <property type="evidence" value="ECO:0007669"/>
    <property type="project" value="InterPro"/>
</dbReference>
<dbReference type="GO" id="GO:0033388">
    <property type="term" value="P:putrescine biosynthetic process from arginine"/>
    <property type="evidence" value="ECO:0007669"/>
    <property type="project" value="UniProtKB-UniRule"/>
</dbReference>
<dbReference type="Gene3D" id="3.75.10.10">
    <property type="entry name" value="L-arginine/glycine Amidinotransferase, Chain A"/>
    <property type="match status" value="1"/>
</dbReference>
<dbReference type="HAMAP" id="MF_01841">
    <property type="entry name" value="Agmatine_deimin"/>
    <property type="match status" value="1"/>
</dbReference>
<dbReference type="InterPro" id="IPR017754">
    <property type="entry name" value="Agmatine_deiminase"/>
</dbReference>
<dbReference type="InterPro" id="IPR007466">
    <property type="entry name" value="Peptidyl-Arg-deiminase_porph"/>
</dbReference>
<dbReference type="NCBIfam" id="TIGR03380">
    <property type="entry name" value="agmatine_aguA"/>
    <property type="match status" value="1"/>
</dbReference>
<dbReference type="NCBIfam" id="NF010070">
    <property type="entry name" value="PRK13551.1"/>
    <property type="match status" value="1"/>
</dbReference>
<dbReference type="PANTHER" id="PTHR31377">
    <property type="entry name" value="AGMATINE DEIMINASE-RELATED"/>
    <property type="match status" value="1"/>
</dbReference>
<dbReference type="PANTHER" id="PTHR31377:SF0">
    <property type="entry name" value="AGMATINE DEIMINASE-RELATED"/>
    <property type="match status" value="1"/>
</dbReference>
<dbReference type="Pfam" id="PF04371">
    <property type="entry name" value="PAD_porph"/>
    <property type="match status" value="1"/>
</dbReference>
<dbReference type="SUPFAM" id="SSF55909">
    <property type="entry name" value="Pentein"/>
    <property type="match status" value="1"/>
</dbReference>
<reference key="1">
    <citation type="journal article" date="2009" name="Genome Biol.">
        <title>Genomic and genetic analyses of diversity and plant interactions of Pseudomonas fluorescens.</title>
        <authorList>
            <person name="Silby M.W."/>
            <person name="Cerdeno-Tarraga A.M."/>
            <person name="Vernikos G.S."/>
            <person name="Giddens S.R."/>
            <person name="Jackson R.W."/>
            <person name="Preston G.M."/>
            <person name="Zhang X.-X."/>
            <person name="Moon C.D."/>
            <person name="Gehrig S.M."/>
            <person name="Godfrey S.A.C."/>
            <person name="Knight C.G."/>
            <person name="Malone J.G."/>
            <person name="Robinson Z."/>
            <person name="Spiers A.J."/>
            <person name="Harris S."/>
            <person name="Challis G.L."/>
            <person name="Yaxley A.M."/>
            <person name="Harris D."/>
            <person name="Seeger K."/>
            <person name="Murphy L."/>
            <person name="Rutter S."/>
            <person name="Squares R."/>
            <person name="Quail M.A."/>
            <person name="Saunders E."/>
            <person name="Mavromatis K."/>
            <person name="Brettin T.S."/>
            <person name="Bentley S.D."/>
            <person name="Hothersall J."/>
            <person name="Stephens E."/>
            <person name="Thomas C.M."/>
            <person name="Parkhill J."/>
            <person name="Levy S.B."/>
            <person name="Rainey P.B."/>
            <person name="Thomson N.R."/>
        </authorList>
    </citation>
    <scope>NUCLEOTIDE SEQUENCE [LARGE SCALE GENOMIC DNA]</scope>
    <source>
        <strain>SBW25</strain>
    </source>
</reference>